<accession>A8NIX5</accession>
<name>CB081_BOVIN</name>
<proteinExistence type="evidence at transcript level"/>
<organism>
    <name type="scientific">Bos taurus</name>
    <name type="common">Bovine</name>
    <dbReference type="NCBI Taxonomy" id="9913"/>
    <lineage>
        <taxon>Eukaryota</taxon>
        <taxon>Metazoa</taxon>
        <taxon>Chordata</taxon>
        <taxon>Craniata</taxon>
        <taxon>Vertebrata</taxon>
        <taxon>Euteleostomi</taxon>
        <taxon>Mammalia</taxon>
        <taxon>Eutheria</taxon>
        <taxon>Laurasiatheria</taxon>
        <taxon>Artiodactyla</taxon>
        <taxon>Ruminantia</taxon>
        <taxon>Pecora</taxon>
        <taxon>Bovidae</taxon>
        <taxon>Bovinae</taxon>
        <taxon>Bos</taxon>
    </lineage>
</organism>
<feature type="chain" id="PRO_0000328765" description="Uncharacterized protein C2orf81 homolog">
    <location>
        <begin position="1"/>
        <end position="503"/>
    </location>
</feature>
<feature type="region of interest" description="Disordered" evidence="2">
    <location>
        <begin position="1"/>
        <end position="29"/>
    </location>
</feature>
<feature type="region of interest" description="Disordered" evidence="2">
    <location>
        <begin position="149"/>
        <end position="227"/>
    </location>
</feature>
<feature type="region of interest" description="Disordered" evidence="2">
    <location>
        <begin position="346"/>
        <end position="370"/>
    </location>
</feature>
<feature type="region of interest" description="Disordered" evidence="2">
    <location>
        <begin position="450"/>
        <end position="475"/>
    </location>
</feature>
<feature type="compositionally biased region" description="Basic and acidic residues" evidence="2">
    <location>
        <begin position="1"/>
        <end position="23"/>
    </location>
</feature>
<feature type="compositionally biased region" description="Basic and acidic residues" evidence="2">
    <location>
        <begin position="203"/>
        <end position="215"/>
    </location>
</feature>
<feature type="compositionally biased region" description="Basic and acidic residues" evidence="2">
    <location>
        <begin position="347"/>
        <end position="356"/>
    </location>
</feature>
<feature type="modified residue" description="Phosphoserine" evidence="1">
    <location>
        <position position="239"/>
    </location>
</feature>
<feature type="modified residue" description="Phosphoserine" evidence="1">
    <location>
        <position position="243"/>
    </location>
</feature>
<comment type="sequence caution" evidence="3">
    <conflict type="frameshift">
        <sequence resource="EMBL-CDS" id="AAI09815"/>
    </conflict>
</comment>
<keyword id="KW-0597">Phosphoprotein</keyword>
<keyword id="KW-1185">Reference proteome</keyword>
<reference key="1">
    <citation type="submission" date="2005-11" db="EMBL/GenBank/DDBJ databases">
        <authorList>
            <consortium name="NIH - Mammalian Gene Collection (MGC) project"/>
        </authorList>
    </citation>
    <scope>NUCLEOTIDE SEQUENCE [LARGE SCALE MRNA]</scope>
    <source>
        <strain>Crossbred X Angus</strain>
        <tissue>Liver</tissue>
    </source>
</reference>
<dbReference type="EMBL" id="BC109814">
    <property type="protein sequence ID" value="AAI09815.1"/>
    <property type="status" value="ALT_FRAME"/>
    <property type="molecule type" value="mRNA"/>
</dbReference>
<dbReference type="RefSeq" id="NP_001103658.2">
    <property type="nucleotide sequence ID" value="NM_001110188.2"/>
</dbReference>
<dbReference type="FunCoup" id="A8NIX5">
    <property type="interactions" value="179"/>
</dbReference>
<dbReference type="STRING" id="9913.ENSBTAP00000047639"/>
<dbReference type="GeneID" id="789060"/>
<dbReference type="KEGG" id="bta:789060"/>
<dbReference type="CTD" id="789060"/>
<dbReference type="eggNOG" id="KOG1208">
    <property type="taxonomic scope" value="Eukaryota"/>
</dbReference>
<dbReference type="InParanoid" id="A8NIX5"/>
<dbReference type="OrthoDB" id="193650at2759"/>
<dbReference type="Proteomes" id="UP000009136">
    <property type="component" value="Unplaced"/>
</dbReference>
<dbReference type="InterPro" id="IPR028042">
    <property type="entry name" value="DUF4639"/>
</dbReference>
<dbReference type="PANTHER" id="PTHR34438:SF1">
    <property type="entry name" value="CHROMOSOME 2 OPEN READING FRAME 81"/>
    <property type="match status" value="1"/>
</dbReference>
<dbReference type="PANTHER" id="PTHR34438">
    <property type="entry name" value="SI:DKEY-97L20.6"/>
    <property type="match status" value="1"/>
</dbReference>
<dbReference type="Pfam" id="PF15479">
    <property type="entry name" value="DUF4639"/>
    <property type="match status" value="2"/>
</dbReference>
<evidence type="ECO:0000250" key="1">
    <source>
        <dbReference type="UniProtKB" id="Q6AXP4"/>
    </source>
</evidence>
<evidence type="ECO:0000256" key="2">
    <source>
        <dbReference type="SAM" id="MobiDB-lite"/>
    </source>
</evidence>
<evidence type="ECO:0000305" key="3"/>
<protein>
    <recommendedName>
        <fullName>Uncharacterized protein C2orf81 homolog</fullName>
    </recommendedName>
</protein>
<sequence length="503" mass="54734">MAHEGPRQVRDRGMTRSKAEKVRPPTVPVPQVDIVPGRLTEAEWIAFTALEEGEDVVGDILADLVARVIDSAFKVYLTQQCIPFTISQAREAMLQITEWRFLARDEGESAVAEDPTWGEDEEPLACTTDAWAQGSVPVLHARASMGLEETFQGEDQDSVDQIPLGGSWKDSGSQEPMESWELTVTPDSPPTPELLQETGPRSPLEKLGDQSRSDQTDLFAVGSSNSSSQLSMEMVPAGSTHASLELSLVASPQASVERAQPISSQFSLEDLYNCTPQPHAAGDRLELREEKVPLIPSRVLVSDPSAGGPTTLNPSAGFQPQPPWLAEERPSALHSRIGRMGTTARLDPARLPRPDMARSPSPKLWPGAKWPSGWEGEAELLGELWAGRTRVPPQGLDLGDRESQDPHQYRHPVPQVLEATSQVTWKPVLLPGALKLAPGVSMWNPSTQVLLSSSEPQRNDREGSASPPIHTGAPKPQVTVAQLMNSALKMWSLPSKRLPNSKP</sequence>